<protein>
    <recommendedName>
        <fullName>Probable Xaa-Pro aminopeptidase PEPP</fullName>
        <ecNumber>3.4.11.9</ecNumber>
    </recommendedName>
    <alternativeName>
        <fullName>Aminoacylproline aminopeptidase</fullName>
    </alternativeName>
    <alternativeName>
        <fullName>Prolidase</fullName>
    </alternativeName>
</protein>
<name>AMPP3_SORMK</name>
<dbReference type="EC" id="3.4.11.9"/>
<dbReference type="EMBL" id="CABT02000023">
    <property type="protein sequence ID" value="CCC12038.1"/>
    <property type="molecule type" value="Genomic_DNA"/>
</dbReference>
<dbReference type="RefSeq" id="XP_003350547.1">
    <property type="nucleotide sequence ID" value="XM_003350499.1"/>
</dbReference>
<dbReference type="SMR" id="D1ZBF6"/>
<dbReference type="STRING" id="771870.D1ZBF6"/>
<dbReference type="GeneID" id="10808095"/>
<dbReference type="KEGG" id="smp:10808095"/>
<dbReference type="VEuPathDB" id="FungiDB:SMAC_02260"/>
<dbReference type="eggNOG" id="KOG2737">
    <property type="taxonomic scope" value="Eukaryota"/>
</dbReference>
<dbReference type="HOGENOM" id="CLU_017266_1_2_1"/>
<dbReference type="InParanoid" id="D1ZBF6"/>
<dbReference type="OMA" id="YELRMIR"/>
<dbReference type="OrthoDB" id="10261878at2759"/>
<dbReference type="Proteomes" id="UP000001881">
    <property type="component" value="Unassembled WGS sequence"/>
</dbReference>
<dbReference type="GO" id="GO:0030145">
    <property type="term" value="F:manganese ion binding"/>
    <property type="evidence" value="ECO:0007669"/>
    <property type="project" value="InterPro"/>
</dbReference>
<dbReference type="GO" id="GO:0070006">
    <property type="term" value="F:metalloaminopeptidase activity"/>
    <property type="evidence" value="ECO:0007669"/>
    <property type="project" value="InterPro"/>
</dbReference>
<dbReference type="GO" id="GO:0006508">
    <property type="term" value="P:proteolysis"/>
    <property type="evidence" value="ECO:0007669"/>
    <property type="project" value="UniProtKB-KW"/>
</dbReference>
<dbReference type="CDD" id="cd01087">
    <property type="entry name" value="Prolidase"/>
    <property type="match status" value="1"/>
</dbReference>
<dbReference type="Gene3D" id="3.90.230.10">
    <property type="entry name" value="Creatinase/methionine aminopeptidase superfamily"/>
    <property type="match status" value="1"/>
</dbReference>
<dbReference type="Gene3D" id="3.40.350.10">
    <property type="entry name" value="Creatinase/prolidase N-terminal domain"/>
    <property type="match status" value="1"/>
</dbReference>
<dbReference type="InterPro" id="IPR007865">
    <property type="entry name" value="Aminopep_P_N"/>
</dbReference>
<dbReference type="InterPro" id="IPR029149">
    <property type="entry name" value="Creatin/AminoP/Spt16_N"/>
</dbReference>
<dbReference type="InterPro" id="IPR036005">
    <property type="entry name" value="Creatinase/aminopeptidase-like"/>
</dbReference>
<dbReference type="InterPro" id="IPR000994">
    <property type="entry name" value="Pept_M24"/>
</dbReference>
<dbReference type="InterPro" id="IPR001131">
    <property type="entry name" value="Peptidase_M24B_aminopep-P_CS"/>
</dbReference>
<dbReference type="InterPro" id="IPR052433">
    <property type="entry name" value="X-Pro_dipept-like"/>
</dbReference>
<dbReference type="PANTHER" id="PTHR43226">
    <property type="entry name" value="XAA-PRO AMINOPEPTIDASE 3"/>
    <property type="match status" value="1"/>
</dbReference>
<dbReference type="PANTHER" id="PTHR43226:SF3">
    <property type="entry name" value="XAA-PRO AMINOPEPTIDASE AN0832-RELATED"/>
    <property type="match status" value="1"/>
</dbReference>
<dbReference type="Pfam" id="PF05195">
    <property type="entry name" value="AMP_N"/>
    <property type="match status" value="1"/>
</dbReference>
<dbReference type="Pfam" id="PF00557">
    <property type="entry name" value="Peptidase_M24"/>
    <property type="match status" value="2"/>
</dbReference>
<dbReference type="SMART" id="SM01011">
    <property type="entry name" value="AMP_N"/>
    <property type="match status" value="1"/>
</dbReference>
<dbReference type="SUPFAM" id="SSF55920">
    <property type="entry name" value="Creatinase/aminopeptidase"/>
    <property type="match status" value="1"/>
</dbReference>
<dbReference type="SUPFAM" id="SSF53092">
    <property type="entry name" value="Creatinase/prolidase N-terminal domain"/>
    <property type="match status" value="1"/>
</dbReference>
<dbReference type="PROSITE" id="PS00491">
    <property type="entry name" value="PROLINE_PEPTIDASE"/>
    <property type="match status" value="1"/>
</dbReference>
<proteinExistence type="inferred from homology"/>
<evidence type="ECO:0000250" key="1"/>
<evidence type="ECO:0000256" key="2">
    <source>
        <dbReference type="SAM" id="MobiDB-lite"/>
    </source>
</evidence>
<evidence type="ECO:0000305" key="3"/>
<comment type="function">
    <text evidence="1">Catalyzes the removal of a penultimate prolyl residue from the N-termini of peptides.</text>
</comment>
<comment type="catalytic activity">
    <reaction>
        <text>Release of any N-terminal amino acid, including proline, that is linked to proline, even from a dipeptide or tripeptide.</text>
        <dbReference type="EC" id="3.4.11.9"/>
    </reaction>
</comment>
<comment type="cofactor">
    <cofactor evidence="1">
        <name>Mn(2+)</name>
        <dbReference type="ChEBI" id="CHEBI:29035"/>
    </cofactor>
    <text evidence="1">Binds 2 manganese ions per subunit.</text>
</comment>
<comment type="similarity">
    <text evidence="3">Belongs to the peptidase M24B family.</text>
</comment>
<organism>
    <name type="scientific">Sordaria macrospora (strain ATCC MYA-333 / DSM 997 / K(L3346) / K-hell)</name>
    <dbReference type="NCBI Taxonomy" id="771870"/>
    <lineage>
        <taxon>Eukaryota</taxon>
        <taxon>Fungi</taxon>
        <taxon>Dikarya</taxon>
        <taxon>Ascomycota</taxon>
        <taxon>Pezizomycotina</taxon>
        <taxon>Sordariomycetes</taxon>
        <taxon>Sordariomycetidae</taxon>
        <taxon>Sordariales</taxon>
        <taxon>Sordariaceae</taxon>
        <taxon>Sordaria</taxon>
    </lineage>
</organism>
<reference key="1">
    <citation type="journal article" date="2010" name="PLoS Genet.">
        <title>De novo assembly of a 40 Mb eukaryotic genome from short sequence reads: Sordaria macrospora, a model organism for fungal morphogenesis.</title>
        <authorList>
            <person name="Nowrousian M."/>
            <person name="Stajich J.E."/>
            <person name="Chu M."/>
            <person name="Engh I."/>
            <person name="Espagne E."/>
            <person name="Halliday K."/>
            <person name="Kamerewerd J."/>
            <person name="Kempken F."/>
            <person name="Knab B."/>
            <person name="Kuo H.-C."/>
            <person name="Osiewacz H.D."/>
            <person name="Poeggeler S."/>
            <person name="Read N.D."/>
            <person name="Seiler S."/>
            <person name="Smith K.M."/>
            <person name="Zickler D."/>
            <person name="Kueck U."/>
            <person name="Freitag M."/>
        </authorList>
    </citation>
    <scope>NUCLEOTIDE SEQUENCE [LARGE SCALE GENOMIC DNA]</scope>
    <source>
        <strain>ATCC MYA-333 / DSM 997 / K(L3346) / K-hell</strain>
    </source>
</reference>
<feature type="chain" id="PRO_0000411889" description="Probable Xaa-Pro aminopeptidase PEPP">
    <location>
        <begin position="1"/>
        <end position="591"/>
    </location>
</feature>
<feature type="region of interest" description="Disordered" evidence="2">
    <location>
        <begin position="31"/>
        <end position="59"/>
    </location>
</feature>
<feature type="region of interest" description="Disordered" evidence="2">
    <location>
        <begin position="441"/>
        <end position="460"/>
    </location>
</feature>
<feature type="compositionally biased region" description="Low complexity" evidence="2">
    <location>
        <begin position="441"/>
        <end position="450"/>
    </location>
</feature>
<feature type="binding site" evidence="1">
    <location>
        <position position="322"/>
    </location>
    <ligand>
        <name>Mn(2+)</name>
        <dbReference type="ChEBI" id="CHEBI:29035"/>
        <label>2</label>
    </ligand>
</feature>
<feature type="binding site" evidence="1">
    <location>
        <position position="333"/>
    </location>
    <ligand>
        <name>Mn(2+)</name>
        <dbReference type="ChEBI" id="CHEBI:29035"/>
        <label>1</label>
    </ligand>
</feature>
<feature type="binding site" evidence="1">
    <location>
        <position position="333"/>
    </location>
    <ligand>
        <name>Mn(2+)</name>
        <dbReference type="ChEBI" id="CHEBI:29035"/>
        <label>2</label>
    </ligand>
</feature>
<feature type="binding site" evidence="1">
    <location>
        <position position="511"/>
    </location>
    <ligand>
        <name>Mn(2+)</name>
        <dbReference type="ChEBI" id="CHEBI:29035"/>
        <label>1</label>
    </ligand>
</feature>
<feature type="binding site" evidence="1">
    <location>
        <position position="552"/>
    </location>
    <ligand>
        <name>Mn(2+)</name>
        <dbReference type="ChEBI" id="CHEBI:29035"/>
        <label>1</label>
    </ligand>
</feature>
<feature type="binding site" evidence="1">
    <location>
        <position position="552"/>
    </location>
    <ligand>
        <name>Mn(2+)</name>
        <dbReference type="ChEBI" id="CHEBI:29035"/>
        <label>2</label>
    </ligand>
</feature>
<sequence>MANSDEIHYDLVEDDEFDIVNIVVEGLDETSIHSPPPSVSAATHGGVKNPSFSQRRTSGRHDFQKWLHEELGKYPAKTHAQKVVEELDAPKSGLIYLRGFNEPLYPYSDQGPPFRQQRHFFYLSGADFPGCAVTYDIPRQHLIVWIRRNDPRLSLWYGTTPSIEEVKSKSDVSDVRYIDDVTKYLHANLTPDTTLFLLHPDQTPKLEPPSLNLRHRFKGPKIDTTSLLPAIEAARVIKTPHEISLIRRAVALTSLAHRMVLQRIKHLSNEREAHAVFEGFCISQGAPRQSYAVIAASGANASTLHYEANDQPLEGKQTMLLDAGCEWGCYASDVTRTFPLKGKWTKEGEEIYKVVERMQRETIDAIRPGRLYYKLHLVACLVAVEELMKLGILHNGTRTEILAKGTVAAFFPHGLGHHVGLEVHDVSGRERLLLSSSSSSGLSRQAISGSRRLPPPRNMKREQVTPEDLAAMYREAMMDTAGDEVEQSAVAPPPPYRGRQRLKENMVVTVEPGIYFHRPYIQSFFLSNPDHAKYINTKVLDRYWDVGGVRIEDCILVTKDGYENLTTAPKGKEALKIINAGIPGFPCDGKA</sequence>
<accession>D1ZBF6</accession>
<accession>F7W336</accession>
<gene>
    <name type="primary">PEPP</name>
    <name type="ORF">SMAC_02260</name>
</gene>
<keyword id="KW-0031">Aminopeptidase</keyword>
<keyword id="KW-0378">Hydrolase</keyword>
<keyword id="KW-0464">Manganese</keyword>
<keyword id="KW-0479">Metal-binding</keyword>
<keyword id="KW-0482">Metalloprotease</keyword>
<keyword id="KW-0645">Protease</keyword>
<keyword id="KW-1185">Reference proteome</keyword>